<comment type="function">
    <text evidence="1">Alpha toxins bind voltage-independently at site-3 of sodium channels (Nav) and inhibit the inactivation of the activated channels, thereby blocking neuronal transmission.</text>
</comment>
<comment type="subcellular location">
    <subcellularLocation>
        <location>Secreted</location>
    </subcellularLocation>
</comment>
<comment type="tissue specificity">
    <text>Expressed by the venom gland.</text>
</comment>
<comment type="domain">
    <text evidence="3">Has the structural arrangement of an alpha-helix connected to antiparallel beta-sheets by disulfide bonds (CS-alpha/beta).</text>
</comment>
<comment type="similarity">
    <text evidence="3">Belongs to the long (4 C-C) scorpion toxin superfamily. Sodium channel inhibitor family. Alpha subfamily.</text>
</comment>
<accession>Q9GQV6</accession>
<protein>
    <recommendedName>
        <fullName>Toxin BmKaTx16</fullName>
    </recommendedName>
    <alternativeName>
        <fullName>Alpha-neurotoxin Tx16</fullName>
    </alternativeName>
    <alternativeName>
        <fullName>BmKalphaTx16</fullName>
    </alternativeName>
</protein>
<reference key="1">
    <citation type="journal article" date="2000" name="Toxicon">
        <title>Nine novel precursors of Buthus martensii scorpion alpha-toxin homologues.</title>
        <authorList>
            <person name="Zhu S.-Y."/>
            <person name="Li W.-X."/>
            <person name="Zeng X.-C."/>
            <person name="Liu H."/>
            <person name="Jiang D.-H."/>
            <person name="Mao X."/>
        </authorList>
    </citation>
    <scope>NUCLEOTIDE SEQUENCE [MRNA]</scope>
    <source>
        <tissue>Venom gland</tissue>
    </source>
</reference>
<dbReference type="EMBL" id="AF156597">
    <property type="protein sequence ID" value="AAG39641.1"/>
    <property type="molecule type" value="mRNA"/>
</dbReference>
<dbReference type="SMR" id="Q9GQV6"/>
<dbReference type="GO" id="GO:0005576">
    <property type="term" value="C:extracellular region"/>
    <property type="evidence" value="ECO:0007669"/>
    <property type="project" value="UniProtKB-SubCell"/>
</dbReference>
<dbReference type="GO" id="GO:0019871">
    <property type="term" value="F:sodium channel inhibitor activity"/>
    <property type="evidence" value="ECO:0007669"/>
    <property type="project" value="InterPro"/>
</dbReference>
<dbReference type="GO" id="GO:0090729">
    <property type="term" value="F:toxin activity"/>
    <property type="evidence" value="ECO:0007669"/>
    <property type="project" value="UniProtKB-KW"/>
</dbReference>
<dbReference type="GO" id="GO:0006952">
    <property type="term" value="P:defense response"/>
    <property type="evidence" value="ECO:0007669"/>
    <property type="project" value="InterPro"/>
</dbReference>
<dbReference type="CDD" id="cd23106">
    <property type="entry name" value="neurotoxins_LC_scorpion"/>
    <property type="match status" value="1"/>
</dbReference>
<dbReference type="FunFam" id="3.30.30.10:FF:000002">
    <property type="entry name" value="Alpha-like toxin BmK-M1"/>
    <property type="match status" value="1"/>
</dbReference>
<dbReference type="Gene3D" id="3.30.30.10">
    <property type="entry name" value="Knottin, scorpion toxin-like"/>
    <property type="match status" value="1"/>
</dbReference>
<dbReference type="InterPro" id="IPR044062">
    <property type="entry name" value="LCN-type_CS_alpha_beta_dom"/>
</dbReference>
<dbReference type="InterPro" id="IPR003614">
    <property type="entry name" value="Scorpion_toxin-like"/>
</dbReference>
<dbReference type="InterPro" id="IPR036574">
    <property type="entry name" value="Scorpion_toxin-like_sf"/>
</dbReference>
<dbReference type="InterPro" id="IPR018218">
    <property type="entry name" value="Scorpion_toxinL"/>
</dbReference>
<dbReference type="InterPro" id="IPR002061">
    <property type="entry name" value="Scorpion_toxinL/defensin"/>
</dbReference>
<dbReference type="Pfam" id="PF00537">
    <property type="entry name" value="Toxin_3"/>
    <property type="match status" value="1"/>
</dbReference>
<dbReference type="PRINTS" id="PR00285">
    <property type="entry name" value="SCORPNTOXIN"/>
</dbReference>
<dbReference type="PRINTS" id="PR00284">
    <property type="entry name" value="TOXIN"/>
</dbReference>
<dbReference type="SMART" id="SM00505">
    <property type="entry name" value="Knot1"/>
    <property type="match status" value="1"/>
</dbReference>
<dbReference type="SUPFAM" id="SSF57095">
    <property type="entry name" value="Scorpion toxin-like"/>
    <property type="match status" value="1"/>
</dbReference>
<dbReference type="PROSITE" id="PS51863">
    <property type="entry name" value="LCN_CSAB"/>
    <property type="match status" value="1"/>
</dbReference>
<feature type="signal peptide" evidence="1">
    <location>
        <begin position="1"/>
        <end position="19"/>
    </location>
</feature>
<feature type="chain" id="PRO_0000035251" description="Toxin BmKaTx16">
    <location>
        <begin position="20"/>
        <end position="83"/>
    </location>
</feature>
<feature type="propeptide" id="PRO_0000035252" description="Removed by a carboxypeptidase" evidence="3">
    <location>
        <position position="84"/>
    </location>
</feature>
<feature type="domain" description="LCN-type CS-alpha/beta" evidence="2">
    <location>
        <begin position="21"/>
        <end position="83"/>
    </location>
</feature>
<feature type="disulfide bond" evidence="2">
    <location>
        <begin position="31"/>
        <end position="82"/>
    </location>
</feature>
<feature type="disulfide bond" evidence="2">
    <location>
        <begin position="35"/>
        <end position="55"/>
    </location>
</feature>
<feature type="disulfide bond" evidence="2">
    <location>
        <begin position="41"/>
        <end position="65"/>
    </location>
</feature>
<feature type="disulfide bond" evidence="2">
    <location>
        <begin position="45"/>
        <end position="67"/>
    </location>
</feature>
<keyword id="KW-1015">Disulfide bond</keyword>
<keyword id="KW-0872">Ion channel impairing toxin</keyword>
<keyword id="KW-0528">Neurotoxin</keyword>
<keyword id="KW-0964">Secreted</keyword>
<keyword id="KW-0732">Signal</keyword>
<keyword id="KW-0800">Toxin</keyword>
<keyword id="KW-0738">Voltage-gated sodium channel impairing toxin</keyword>
<proteinExistence type="evidence at transcript level"/>
<evidence type="ECO:0000250" key="1"/>
<evidence type="ECO:0000255" key="2">
    <source>
        <dbReference type="PROSITE-ProRule" id="PRU01210"/>
    </source>
</evidence>
<evidence type="ECO:0000305" key="3"/>
<name>SC16_OLIMR</name>
<sequence length="84" mass="9511">MNYLVMISFALLLMTGVESVRDAYIAKPHNCVYECARNEYCNDLCTKNGAKSGYCQWVGKYGNGCWCKELPDNVPIRVPGKCHR</sequence>
<organism>
    <name type="scientific">Olivierus martensii</name>
    <name type="common">Manchurian scorpion</name>
    <name type="synonym">Mesobuthus martensii</name>
    <dbReference type="NCBI Taxonomy" id="34649"/>
    <lineage>
        <taxon>Eukaryota</taxon>
        <taxon>Metazoa</taxon>
        <taxon>Ecdysozoa</taxon>
        <taxon>Arthropoda</taxon>
        <taxon>Chelicerata</taxon>
        <taxon>Arachnida</taxon>
        <taxon>Scorpiones</taxon>
        <taxon>Buthida</taxon>
        <taxon>Buthoidea</taxon>
        <taxon>Buthidae</taxon>
        <taxon>Olivierus</taxon>
    </lineage>
</organism>